<dbReference type="EC" id="2.7.11.1"/>
<dbReference type="EMBL" id="X85040">
    <property type="protein sequence ID" value="CAA59410.1"/>
    <property type="molecule type" value="mRNA"/>
</dbReference>
<dbReference type="EMBL" id="AJ222869">
    <property type="protein sequence ID" value="CAA11019.1"/>
    <property type="molecule type" value="Genomic_DNA"/>
</dbReference>
<dbReference type="EMBL" id="CU329672">
    <property type="protein sequence ID" value="CAB52158.1"/>
    <property type="molecule type" value="Genomic_DNA"/>
</dbReference>
<dbReference type="PIR" id="S58882">
    <property type="entry name" value="S58882"/>
</dbReference>
<dbReference type="RefSeq" id="NP_587941.1">
    <property type="nucleotide sequence ID" value="NM_001022932.2"/>
</dbReference>
<dbReference type="SMR" id="Q09170"/>
<dbReference type="BioGRID" id="275533">
    <property type="interactions" value="122"/>
</dbReference>
<dbReference type="DIP" id="DIP-46174N"/>
<dbReference type="FunCoup" id="Q09170">
    <property type="interactions" value="649"/>
</dbReference>
<dbReference type="IntAct" id="Q09170">
    <property type="interactions" value="2"/>
</dbReference>
<dbReference type="STRING" id="284812.Q09170"/>
<dbReference type="iPTMnet" id="Q09170"/>
<dbReference type="PaxDb" id="4896-SPCC18B5.11c.1"/>
<dbReference type="EnsemblFungi" id="SPCC18B5.11c.1">
    <property type="protein sequence ID" value="SPCC18B5.11c.1:pep"/>
    <property type="gene ID" value="SPCC18B5.11c"/>
</dbReference>
<dbReference type="GeneID" id="2538959"/>
<dbReference type="KEGG" id="spo:2538959"/>
<dbReference type="PomBase" id="SPCC18B5.11c">
    <property type="gene designation" value="cds1"/>
</dbReference>
<dbReference type="VEuPathDB" id="FungiDB:SPCC18B5.11c"/>
<dbReference type="eggNOG" id="KOG0615">
    <property type="taxonomic scope" value="Eukaryota"/>
</dbReference>
<dbReference type="HOGENOM" id="CLU_000288_63_47_1"/>
<dbReference type="InParanoid" id="Q09170"/>
<dbReference type="OMA" id="FVHDNSF"/>
<dbReference type="PhylomeDB" id="Q09170"/>
<dbReference type="BRENDA" id="2.7.11.1">
    <property type="organism ID" value="5613"/>
</dbReference>
<dbReference type="PRO" id="PR:Q09170"/>
<dbReference type="Proteomes" id="UP000002485">
    <property type="component" value="Chromosome III"/>
</dbReference>
<dbReference type="GO" id="GO:0032153">
    <property type="term" value="C:cell division site"/>
    <property type="evidence" value="ECO:0007005"/>
    <property type="project" value="PomBase"/>
</dbReference>
<dbReference type="GO" id="GO:0005737">
    <property type="term" value="C:cytoplasm"/>
    <property type="evidence" value="ECO:0000318"/>
    <property type="project" value="GO_Central"/>
</dbReference>
<dbReference type="GO" id="GO:0005829">
    <property type="term" value="C:cytosol"/>
    <property type="evidence" value="ECO:0007005"/>
    <property type="project" value="PomBase"/>
</dbReference>
<dbReference type="GO" id="GO:0005634">
    <property type="term" value="C:nucleus"/>
    <property type="evidence" value="ECO:0000314"/>
    <property type="project" value="PomBase"/>
</dbReference>
<dbReference type="GO" id="GO:0005524">
    <property type="term" value="F:ATP binding"/>
    <property type="evidence" value="ECO:0000255"/>
    <property type="project" value="PomBase"/>
</dbReference>
<dbReference type="GO" id="GO:0106310">
    <property type="term" value="F:protein serine kinase activity"/>
    <property type="evidence" value="ECO:0007669"/>
    <property type="project" value="RHEA"/>
</dbReference>
<dbReference type="GO" id="GO:0004674">
    <property type="term" value="F:protein serine/threonine kinase activity"/>
    <property type="evidence" value="ECO:0000314"/>
    <property type="project" value="UniProtKB"/>
</dbReference>
<dbReference type="GO" id="GO:0033315">
    <property type="term" value="P:meiotic G2/MI DNA replication checkpoint signaling"/>
    <property type="evidence" value="ECO:0000315"/>
    <property type="project" value="PomBase"/>
</dbReference>
<dbReference type="GO" id="GO:0051598">
    <property type="term" value="P:meiotic recombination checkpoint signaling"/>
    <property type="evidence" value="ECO:0000318"/>
    <property type="project" value="GO_Central"/>
</dbReference>
<dbReference type="GO" id="GO:0033314">
    <property type="term" value="P:mitotic DNA replication checkpoint signaling"/>
    <property type="evidence" value="ECO:0000315"/>
    <property type="project" value="PomBase"/>
</dbReference>
<dbReference type="GO" id="GO:0031573">
    <property type="term" value="P:mitotic intra-S DNA damage checkpoint signaling"/>
    <property type="evidence" value="ECO:0000315"/>
    <property type="project" value="UniProtKB"/>
</dbReference>
<dbReference type="CDD" id="cd22689">
    <property type="entry name" value="FHA_RAD53-like_rpt1"/>
    <property type="match status" value="1"/>
</dbReference>
<dbReference type="CDD" id="cd14098">
    <property type="entry name" value="STKc_Rad53_Cds1"/>
    <property type="match status" value="1"/>
</dbReference>
<dbReference type="FunFam" id="3.30.200.20:FF:000042">
    <property type="entry name" value="Aurora kinase A"/>
    <property type="match status" value="1"/>
</dbReference>
<dbReference type="FunFam" id="1.10.510.10:FF:000571">
    <property type="entry name" value="Maternal embryonic leucine zipper kinase"/>
    <property type="match status" value="1"/>
</dbReference>
<dbReference type="Gene3D" id="2.60.200.20">
    <property type="match status" value="1"/>
</dbReference>
<dbReference type="Gene3D" id="1.10.510.10">
    <property type="entry name" value="Transferase(Phosphotransferase) domain 1"/>
    <property type="match status" value="1"/>
</dbReference>
<dbReference type="InterPro" id="IPR000253">
    <property type="entry name" value="FHA_dom"/>
</dbReference>
<dbReference type="InterPro" id="IPR011009">
    <property type="entry name" value="Kinase-like_dom_sf"/>
</dbReference>
<dbReference type="InterPro" id="IPR000719">
    <property type="entry name" value="Prot_kinase_dom"/>
</dbReference>
<dbReference type="InterPro" id="IPR017441">
    <property type="entry name" value="Protein_kinase_ATP_BS"/>
</dbReference>
<dbReference type="InterPro" id="IPR008271">
    <property type="entry name" value="Ser/Thr_kinase_AS"/>
</dbReference>
<dbReference type="InterPro" id="IPR008984">
    <property type="entry name" value="SMAD_FHA_dom_sf"/>
</dbReference>
<dbReference type="PANTHER" id="PTHR44167">
    <property type="entry name" value="OVARIAN-SPECIFIC SERINE/THREONINE-PROTEIN KINASE LOK-RELATED"/>
    <property type="match status" value="1"/>
</dbReference>
<dbReference type="PANTHER" id="PTHR44167:SF24">
    <property type="entry name" value="SERINE_THREONINE-PROTEIN KINASE CHK2"/>
    <property type="match status" value="1"/>
</dbReference>
<dbReference type="Pfam" id="PF00498">
    <property type="entry name" value="FHA"/>
    <property type="match status" value="1"/>
</dbReference>
<dbReference type="Pfam" id="PF00069">
    <property type="entry name" value="Pkinase"/>
    <property type="match status" value="1"/>
</dbReference>
<dbReference type="SMART" id="SM00240">
    <property type="entry name" value="FHA"/>
    <property type="match status" value="1"/>
</dbReference>
<dbReference type="SMART" id="SM00220">
    <property type="entry name" value="S_TKc"/>
    <property type="match status" value="1"/>
</dbReference>
<dbReference type="SUPFAM" id="SSF56112">
    <property type="entry name" value="Protein kinase-like (PK-like)"/>
    <property type="match status" value="1"/>
</dbReference>
<dbReference type="SUPFAM" id="SSF49879">
    <property type="entry name" value="SMAD/FHA domain"/>
    <property type="match status" value="1"/>
</dbReference>
<dbReference type="PROSITE" id="PS50006">
    <property type="entry name" value="FHA_DOMAIN"/>
    <property type="match status" value="1"/>
</dbReference>
<dbReference type="PROSITE" id="PS00107">
    <property type="entry name" value="PROTEIN_KINASE_ATP"/>
    <property type="match status" value="1"/>
</dbReference>
<dbReference type="PROSITE" id="PS50011">
    <property type="entry name" value="PROTEIN_KINASE_DOM"/>
    <property type="match status" value="1"/>
</dbReference>
<dbReference type="PROSITE" id="PS00108">
    <property type="entry name" value="PROTEIN_KINASE_ST"/>
    <property type="match status" value="1"/>
</dbReference>
<reference key="1">
    <citation type="journal article" date="1995" name="Nature">
        <title>A kinase from fission yeast responsible for blocking mitosis in S phase.</title>
        <authorList>
            <person name="Murakami H."/>
            <person name="Okayama H."/>
        </authorList>
    </citation>
    <scope>NUCLEOTIDE SEQUENCE [MRNA]</scope>
    <scope>FUNCTION</scope>
</reference>
<reference key="2">
    <citation type="journal article" date="1998" name="Genes Dev.">
        <title>S-phase-specific activation of Cds1 kinase defines a subpathway of the checkpoint response in Schizosaccharomyces pombe.</title>
        <authorList>
            <person name="Lindsay H.D."/>
            <person name="Griffiths D.J.F."/>
            <person name="Edwards R.J."/>
            <person name="Christensen P.U."/>
            <person name="Murray J.M."/>
            <person name="Osman F."/>
            <person name="Walworth N."/>
            <person name="Carr A.M."/>
        </authorList>
    </citation>
    <scope>NUCLEOTIDE SEQUENCE [GENOMIC DNA]</scope>
    <scope>FUNCTION</scope>
    <scope>INTERACTION WITH RAD26</scope>
    <scope>PHOSPHORYLATION</scope>
    <source>
        <strain>972 / ATCC 24843</strain>
    </source>
</reference>
<reference key="3">
    <citation type="journal article" date="2002" name="Nature">
        <title>The genome sequence of Schizosaccharomyces pombe.</title>
        <authorList>
            <person name="Wood V."/>
            <person name="Gwilliam R."/>
            <person name="Rajandream M.A."/>
            <person name="Lyne M.H."/>
            <person name="Lyne R."/>
            <person name="Stewart A."/>
            <person name="Sgouros J.G."/>
            <person name="Peat N."/>
            <person name="Hayles J."/>
            <person name="Baker S.G."/>
            <person name="Basham D."/>
            <person name="Bowman S."/>
            <person name="Brooks K."/>
            <person name="Brown D."/>
            <person name="Brown S."/>
            <person name="Chillingworth T."/>
            <person name="Churcher C.M."/>
            <person name="Collins M."/>
            <person name="Connor R."/>
            <person name="Cronin A."/>
            <person name="Davis P."/>
            <person name="Feltwell T."/>
            <person name="Fraser A."/>
            <person name="Gentles S."/>
            <person name="Goble A."/>
            <person name="Hamlin N."/>
            <person name="Harris D.E."/>
            <person name="Hidalgo J."/>
            <person name="Hodgson G."/>
            <person name="Holroyd S."/>
            <person name="Hornsby T."/>
            <person name="Howarth S."/>
            <person name="Huckle E.J."/>
            <person name="Hunt S."/>
            <person name="Jagels K."/>
            <person name="James K.D."/>
            <person name="Jones L."/>
            <person name="Jones M."/>
            <person name="Leather S."/>
            <person name="McDonald S."/>
            <person name="McLean J."/>
            <person name="Mooney P."/>
            <person name="Moule S."/>
            <person name="Mungall K.L."/>
            <person name="Murphy L.D."/>
            <person name="Niblett D."/>
            <person name="Odell C."/>
            <person name="Oliver K."/>
            <person name="O'Neil S."/>
            <person name="Pearson D."/>
            <person name="Quail M.A."/>
            <person name="Rabbinowitsch E."/>
            <person name="Rutherford K.M."/>
            <person name="Rutter S."/>
            <person name="Saunders D."/>
            <person name="Seeger K."/>
            <person name="Sharp S."/>
            <person name="Skelton J."/>
            <person name="Simmonds M.N."/>
            <person name="Squares R."/>
            <person name="Squares S."/>
            <person name="Stevens K."/>
            <person name="Taylor K."/>
            <person name="Taylor R.G."/>
            <person name="Tivey A."/>
            <person name="Walsh S.V."/>
            <person name="Warren T."/>
            <person name="Whitehead S."/>
            <person name="Woodward J.R."/>
            <person name="Volckaert G."/>
            <person name="Aert R."/>
            <person name="Robben J."/>
            <person name="Grymonprez B."/>
            <person name="Weltjens I."/>
            <person name="Vanstreels E."/>
            <person name="Rieger M."/>
            <person name="Schaefer M."/>
            <person name="Mueller-Auer S."/>
            <person name="Gabel C."/>
            <person name="Fuchs M."/>
            <person name="Duesterhoeft A."/>
            <person name="Fritzc C."/>
            <person name="Holzer E."/>
            <person name="Moestl D."/>
            <person name="Hilbert H."/>
            <person name="Borzym K."/>
            <person name="Langer I."/>
            <person name="Beck A."/>
            <person name="Lehrach H."/>
            <person name="Reinhardt R."/>
            <person name="Pohl T.M."/>
            <person name="Eger P."/>
            <person name="Zimmermann W."/>
            <person name="Wedler H."/>
            <person name="Wambutt R."/>
            <person name="Purnelle B."/>
            <person name="Goffeau A."/>
            <person name="Cadieu E."/>
            <person name="Dreano S."/>
            <person name="Gloux S."/>
            <person name="Lelaure V."/>
            <person name="Mottier S."/>
            <person name="Galibert F."/>
            <person name="Aves S.J."/>
            <person name="Xiang Z."/>
            <person name="Hunt C."/>
            <person name="Moore K."/>
            <person name="Hurst S.M."/>
            <person name="Lucas M."/>
            <person name="Rochet M."/>
            <person name="Gaillardin C."/>
            <person name="Tallada V.A."/>
            <person name="Garzon A."/>
            <person name="Thode G."/>
            <person name="Daga R.R."/>
            <person name="Cruzado L."/>
            <person name="Jimenez J."/>
            <person name="Sanchez M."/>
            <person name="del Rey F."/>
            <person name="Benito J."/>
            <person name="Dominguez A."/>
            <person name="Revuelta J.L."/>
            <person name="Moreno S."/>
            <person name="Armstrong J."/>
            <person name="Forsburg S.L."/>
            <person name="Cerutti L."/>
            <person name="Lowe T."/>
            <person name="McCombie W.R."/>
            <person name="Paulsen I."/>
            <person name="Potashkin J."/>
            <person name="Shpakovski G.V."/>
            <person name="Ussery D."/>
            <person name="Barrell B.G."/>
            <person name="Nurse P."/>
        </authorList>
    </citation>
    <scope>NUCLEOTIDE SEQUENCE [LARGE SCALE GENOMIC DNA]</scope>
    <source>
        <strain>972 / ATCC 24843</strain>
    </source>
</reference>
<reference key="4">
    <citation type="journal article" date="2003" name="Mol. Cell. Biol.">
        <title>Replication checkpoint kinase Cds1 regulates recombinational repair protein Rad60.</title>
        <authorList>
            <person name="Boddy M.N."/>
            <person name="Shanahan P."/>
            <person name="McDonald W.H."/>
            <person name="Lopez-Girona A."/>
            <person name="Noguchi E."/>
            <person name="Yates J.R. III"/>
            <person name="Russell P."/>
        </authorList>
    </citation>
    <scope>FUNCTION IN PHOSPHORYLATION OF RAD60</scope>
</reference>
<reference key="5">
    <citation type="journal article" date="2008" name="J. Proteome Res.">
        <title>Phosphoproteome analysis of fission yeast.</title>
        <authorList>
            <person name="Wilson-Grady J.T."/>
            <person name="Villen J."/>
            <person name="Gygi S.P."/>
        </authorList>
    </citation>
    <scope>PHOSPHORYLATION [LARGE SCALE ANALYSIS] AT THR-443</scope>
    <scope>IDENTIFICATION BY MASS SPECTROMETRY</scope>
</reference>
<reference key="6">
    <citation type="journal article" date="2012" name="Cell">
        <title>The intra-s phase checkpoint targets dna2 to prevent stalled replication forks from reversing.</title>
        <authorList>
            <person name="Hu J."/>
            <person name="Sun L."/>
            <person name="Shen F."/>
            <person name="Chen Y."/>
            <person name="Hua Y."/>
            <person name="Liu Y."/>
            <person name="Zhang M."/>
            <person name="Hu Y."/>
            <person name="Wang Q."/>
            <person name="Xu W."/>
            <person name="Sun F."/>
            <person name="Ji J."/>
            <person name="Murray J.M."/>
            <person name="Carr A.M."/>
            <person name="Kong D."/>
        </authorList>
    </citation>
    <scope>FUNCTION</scope>
</reference>
<keyword id="KW-0067">ATP-binding</keyword>
<keyword id="KW-0131">Cell cycle</keyword>
<keyword id="KW-0418">Kinase</keyword>
<keyword id="KW-0547">Nucleotide-binding</keyword>
<keyword id="KW-0597">Phosphoprotein</keyword>
<keyword id="KW-1185">Reference proteome</keyword>
<keyword id="KW-0723">Serine/threonine-protein kinase</keyword>
<keyword id="KW-0808">Transferase</keyword>
<name>RAD53_SCHPO</name>
<comment type="function">
    <text evidence="5 7 8 9">Has a role in the DNA replication-monitoring S/G2 checkpoint system. It is responsible for blocking mitosis in the S phase. It monitors DNA synthesis by interacting with DNA polymerase alpha and sends a signal to block the onset of mitosis while DNA synthesis is in progress. Phosphorylates rad60 and dna2.</text>
</comment>
<comment type="catalytic activity">
    <reaction>
        <text>L-seryl-[protein] + ATP = O-phospho-L-seryl-[protein] + ADP + H(+)</text>
        <dbReference type="Rhea" id="RHEA:17989"/>
        <dbReference type="Rhea" id="RHEA-COMP:9863"/>
        <dbReference type="Rhea" id="RHEA-COMP:11604"/>
        <dbReference type="ChEBI" id="CHEBI:15378"/>
        <dbReference type="ChEBI" id="CHEBI:29999"/>
        <dbReference type="ChEBI" id="CHEBI:30616"/>
        <dbReference type="ChEBI" id="CHEBI:83421"/>
        <dbReference type="ChEBI" id="CHEBI:456216"/>
        <dbReference type="EC" id="2.7.11.1"/>
    </reaction>
</comment>
<comment type="catalytic activity">
    <reaction>
        <text>L-threonyl-[protein] + ATP = O-phospho-L-threonyl-[protein] + ADP + H(+)</text>
        <dbReference type="Rhea" id="RHEA:46608"/>
        <dbReference type="Rhea" id="RHEA-COMP:11060"/>
        <dbReference type="Rhea" id="RHEA-COMP:11605"/>
        <dbReference type="ChEBI" id="CHEBI:15378"/>
        <dbReference type="ChEBI" id="CHEBI:30013"/>
        <dbReference type="ChEBI" id="CHEBI:30616"/>
        <dbReference type="ChEBI" id="CHEBI:61977"/>
        <dbReference type="ChEBI" id="CHEBI:456216"/>
        <dbReference type="EC" id="2.7.11.1"/>
    </reaction>
</comment>
<comment type="subunit">
    <text evidence="9">Interacts with rad26.</text>
</comment>
<comment type="interaction">
    <interactant intactId="EBI-3650524">
        <id>Q09170</id>
    </interactant>
    <interactant intactId="EBI-15720278">
        <id>O42913</id>
        <label>nrm1</label>
    </interactant>
    <organismsDiffer>false</organismsDiffer>
    <experiments>2</experiments>
</comment>
<comment type="PTM">
    <text evidence="6 9">Autophosphorylated.</text>
</comment>
<comment type="similarity">
    <text evidence="10">Belongs to the protein kinase superfamily. CAMK Ser/Thr protein kinase family. CHEK2 subfamily.</text>
</comment>
<protein>
    <recommendedName>
        <fullName>Serine/threonine-protein kinase cds1</fullName>
        <ecNumber>2.7.11.1</ecNumber>
    </recommendedName>
    <alternativeName>
        <fullName>Checkpoint kinase cds1</fullName>
    </alternativeName>
</protein>
<proteinExistence type="evidence at protein level"/>
<evidence type="ECO:0000255" key="1">
    <source>
        <dbReference type="PROSITE-ProRule" id="PRU00086"/>
    </source>
</evidence>
<evidence type="ECO:0000255" key="2">
    <source>
        <dbReference type="PROSITE-ProRule" id="PRU00159"/>
    </source>
</evidence>
<evidence type="ECO:0000255" key="3">
    <source>
        <dbReference type="PROSITE-ProRule" id="PRU10027"/>
    </source>
</evidence>
<evidence type="ECO:0000256" key="4">
    <source>
        <dbReference type="SAM" id="MobiDB-lite"/>
    </source>
</evidence>
<evidence type="ECO:0000269" key="5">
    <source>
    </source>
</evidence>
<evidence type="ECO:0000269" key="6">
    <source>
    </source>
</evidence>
<evidence type="ECO:0000269" key="7">
    <source>
    </source>
</evidence>
<evidence type="ECO:0000269" key="8">
    <source>
    </source>
</evidence>
<evidence type="ECO:0000269" key="9">
    <source>
    </source>
</evidence>
<evidence type="ECO:0000305" key="10"/>
<feature type="chain" id="PRO_0000085846" description="Serine/threonine-protein kinase cds1">
    <location>
        <begin position="1"/>
        <end position="460"/>
    </location>
</feature>
<feature type="domain" description="FHA" evidence="1">
    <location>
        <begin position="60"/>
        <end position="116"/>
    </location>
</feature>
<feature type="domain" description="Protein kinase" evidence="2">
    <location>
        <begin position="167"/>
        <end position="433"/>
    </location>
</feature>
<feature type="region of interest" description="Disordered" evidence="4">
    <location>
        <begin position="438"/>
        <end position="460"/>
    </location>
</feature>
<feature type="compositionally biased region" description="Basic and acidic residues" evidence="4">
    <location>
        <begin position="438"/>
        <end position="453"/>
    </location>
</feature>
<feature type="active site" description="Proton acceptor" evidence="2 3">
    <location>
        <position position="294"/>
    </location>
</feature>
<feature type="binding site" evidence="2">
    <location>
        <begin position="173"/>
        <end position="181"/>
    </location>
    <ligand>
        <name>ATP</name>
        <dbReference type="ChEBI" id="CHEBI:30616"/>
    </ligand>
</feature>
<feature type="binding site" evidence="2">
    <location>
        <position position="196"/>
    </location>
    <ligand>
        <name>ATP</name>
        <dbReference type="ChEBI" id="CHEBI:30616"/>
    </ligand>
</feature>
<feature type="modified residue" description="Phosphothreonine" evidence="6">
    <location>
        <position position="443"/>
    </location>
</feature>
<feature type="sequence conflict" description="In Ref. 1; CAA59410." evidence="10" ref="1">
    <original>R</original>
    <variation>G</variation>
    <location>
        <position position="61"/>
    </location>
</feature>
<feature type="sequence conflict" description="In Ref. 1; CAA59410." evidence="10" ref="1">
    <original>F</original>
    <variation>C</variation>
    <location>
        <position position="238"/>
    </location>
</feature>
<gene>
    <name type="primary">cds1</name>
    <name type="ORF">SPCC18B5.11c</name>
</gene>
<accession>Q09170</accession>
<accession>O42642</accession>
<sequence>MEEPEEATQATQEAPLHVSQNIAKQVVNNENVFMKLVMTRMLDGKTEVIPLTTDVHNGFWRFGRHKSCEVVLNGPRVSNFHFEIYQGHRNDSDESENVVFLHDHSSNGTFLNFERLAKNSRTILSNGDEIRIGLGVPKDEISFLCQVPVKHSRDSQKNMIKSENSHYEIIRTLGSGTFAVVKLAVEVNSGKWYAIKIINKRKILLTSSEKRATEMFQREIDILKSLHHPGVVQCHEIFENDDELFIVMEYVEGGDLMDFLIANGSIDEQDCKPLLKQLLETLLHLHKQGVTHRDIKPENILITNDFHLKISDFGLAKVIHGTGTFLETFCGTMGYLAPEVLKSKNVNLDGGYDDKVDIWSLGCVLYVMLTASIPFASSSQAKCIELISKGAYPIEPLLENEISEEGIDLINRMLEINPEKRISESEALQHPWFYTVSTHEHRTPPSSSEHEATEQLNSSS</sequence>
<organism>
    <name type="scientific">Schizosaccharomyces pombe (strain 972 / ATCC 24843)</name>
    <name type="common">Fission yeast</name>
    <dbReference type="NCBI Taxonomy" id="284812"/>
    <lineage>
        <taxon>Eukaryota</taxon>
        <taxon>Fungi</taxon>
        <taxon>Dikarya</taxon>
        <taxon>Ascomycota</taxon>
        <taxon>Taphrinomycotina</taxon>
        <taxon>Schizosaccharomycetes</taxon>
        <taxon>Schizosaccharomycetales</taxon>
        <taxon>Schizosaccharomycetaceae</taxon>
        <taxon>Schizosaccharomyces</taxon>
    </lineage>
</organism>